<sequence>METSSPALSIAITILIVLLGLTAFGVYTAFGPPNRALDDPWDDHDD</sequence>
<reference key="1">
    <citation type="journal article" date="2003" name="Proc. Natl. Acad. Sci. U.S.A.">
        <title>Genome sequence of the cyanobacterium Prochlorococcus marinus SS120, a nearly minimal oxyphototrophic genome.</title>
        <authorList>
            <person name="Dufresne A."/>
            <person name="Salanoubat M."/>
            <person name="Partensky F."/>
            <person name="Artiguenave F."/>
            <person name="Axmann I.M."/>
            <person name="Barbe V."/>
            <person name="Duprat S."/>
            <person name="Galperin M.Y."/>
            <person name="Koonin E.V."/>
            <person name="Le Gall F."/>
            <person name="Makarova K.S."/>
            <person name="Ostrowski M."/>
            <person name="Oztas S."/>
            <person name="Robert C."/>
            <person name="Rogozin I.B."/>
            <person name="Scanlan D.J."/>
            <person name="Tandeau de Marsac N."/>
            <person name="Weissenbach J."/>
            <person name="Wincker P."/>
            <person name="Wolf Y.I."/>
            <person name="Hess W.R."/>
        </authorList>
    </citation>
    <scope>NUCLEOTIDE SEQUENCE [LARGE SCALE GENOMIC DNA]</scope>
    <source>
        <strain>SARG / CCMP1375 / SS120</strain>
    </source>
</reference>
<evidence type="ECO:0000255" key="1">
    <source>
        <dbReference type="HAMAP-Rule" id="MF_00293"/>
    </source>
</evidence>
<proteinExistence type="inferred from homology"/>
<organism>
    <name type="scientific">Prochlorococcus marinus (strain SARG / CCMP1375 / SS120)</name>
    <dbReference type="NCBI Taxonomy" id="167539"/>
    <lineage>
        <taxon>Bacteria</taxon>
        <taxon>Bacillati</taxon>
        <taxon>Cyanobacteriota</taxon>
        <taxon>Cyanophyceae</taxon>
        <taxon>Synechococcales</taxon>
        <taxon>Prochlorococcaceae</taxon>
        <taxon>Prochlorococcus</taxon>
    </lineage>
</organism>
<accession>Q7VDT4</accession>
<feature type="chain" id="PRO_0000232784" description="Protein PsbN">
    <location>
        <begin position="1"/>
        <end position="46"/>
    </location>
</feature>
<feature type="transmembrane region" description="Helical" evidence="1">
    <location>
        <begin position="10"/>
        <end position="30"/>
    </location>
</feature>
<name>PSBN_PROMA</name>
<gene>
    <name evidence="1" type="primary">psbN</name>
    <name type="ordered locus">Pro_0284</name>
</gene>
<protein>
    <recommendedName>
        <fullName evidence="1">Protein PsbN</fullName>
    </recommendedName>
</protein>
<dbReference type="EMBL" id="AE017126">
    <property type="protein sequence ID" value="AAP99330.1"/>
    <property type="molecule type" value="Genomic_DNA"/>
</dbReference>
<dbReference type="RefSeq" id="NP_874678.1">
    <property type="nucleotide sequence ID" value="NC_005042.1"/>
</dbReference>
<dbReference type="RefSeq" id="WP_011124439.1">
    <property type="nucleotide sequence ID" value="NC_005042.1"/>
</dbReference>
<dbReference type="SMR" id="Q7VDT4"/>
<dbReference type="STRING" id="167539.Pro_0284"/>
<dbReference type="EnsemblBacteria" id="AAP99330">
    <property type="protein sequence ID" value="AAP99330"/>
    <property type="gene ID" value="Pro_0284"/>
</dbReference>
<dbReference type="KEGG" id="pma:Pro_0284"/>
<dbReference type="PATRIC" id="fig|167539.5.peg.291"/>
<dbReference type="eggNOG" id="ENOG5030PNS">
    <property type="taxonomic scope" value="Bacteria"/>
</dbReference>
<dbReference type="HOGENOM" id="CLU_205504_1_0_3"/>
<dbReference type="OrthoDB" id="532561at2"/>
<dbReference type="Proteomes" id="UP000001420">
    <property type="component" value="Chromosome"/>
</dbReference>
<dbReference type="GO" id="GO:0031676">
    <property type="term" value="C:plasma membrane-derived thylakoid membrane"/>
    <property type="evidence" value="ECO:0007669"/>
    <property type="project" value="UniProtKB-SubCell"/>
</dbReference>
<dbReference type="GO" id="GO:0015979">
    <property type="term" value="P:photosynthesis"/>
    <property type="evidence" value="ECO:0007669"/>
    <property type="project" value="InterPro"/>
</dbReference>
<dbReference type="HAMAP" id="MF_00293">
    <property type="entry name" value="PSII_PsbN"/>
    <property type="match status" value="1"/>
</dbReference>
<dbReference type="InterPro" id="IPR003398">
    <property type="entry name" value="PSII_PsbN"/>
</dbReference>
<dbReference type="NCBIfam" id="NF009650">
    <property type="entry name" value="PRK13183.1"/>
    <property type="match status" value="1"/>
</dbReference>
<dbReference type="Pfam" id="PF02468">
    <property type="entry name" value="PsbN"/>
    <property type="match status" value="1"/>
</dbReference>
<comment type="function">
    <text evidence="1">May play a role in photosystem I and II biogenesis.</text>
</comment>
<comment type="subcellular location">
    <subcellularLocation>
        <location evidence="1">Cellular thylakoid membrane</location>
        <topology evidence="1">Single-pass membrane protein</topology>
    </subcellularLocation>
</comment>
<comment type="similarity">
    <text evidence="1">Belongs to the PsbN family.</text>
</comment>
<comment type="caution">
    <text evidence="1">Originally thought to be a component of PSII; based on experiments in Synechocystis, N.tabacum and barley, and its absence from PSII in T.elongatus and T.vulcanus, this is probably not true.</text>
</comment>
<keyword id="KW-0472">Membrane</keyword>
<keyword id="KW-1185">Reference proteome</keyword>
<keyword id="KW-0793">Thylakoid</keyword>
<keyword id="KW-0812">Transmembrane</keyword>
<keyword id="KW-1133">Transmembrane helix</keyword>